<protein>
    <recommendedName>
        <fullName evidence="1">3-dehydroquinate synthase</fullName>
        <shortName evidence="1">DHQS</shortName>
        <ecNumber evidence="1">4.2.3.4</ecNumber>
    </recommendedName>
</protein>
<sequence length="360" mass="39467">MQTLHVELGERRYPIFIGSQLDPKQLLEPYIHGQQVMIVSNVTVAPLYLSHYQEALESLGKTVATCILPDGEKYKDIQHLNLIFDALLEAGFNRDCTVLALGGGVIGDMAGFASACFQRGVYFVQVPTTLLSQVDSSVGGKTGINHPLGKNMLGAFQQPQVVLADMAQLNTLPERELSAGLAEVIKYALLGDEDFLVWLEENMDGLVARDADLLAEAVYRSCAHKARIVANDEKEQGERALLNLGHTFGHAIESYLGYGTWLHGEAVATGMVMAADLSQRLGWISNEDVARTKKIIQRANLPISCPQIPLDDFLGHMAHDKKVLNGQLRLVLLKQLGQAVITKDFDVELMKQAILANQHG</sequence>
<gene>
    <name evidence="1" type="primary">aroB</name>
    <name type="ordered locus">ABSDF0302</name>
</gene>
<evidence type="ECO:0000255" key="1">
    <source>
        <dbReference type="HAMAP-Rule" id="MF_00110"/>
    </source>
</evidence>
<proteinExistence type="inferred from homology"/>
<dbReference type="EC" id="4.2.3.4" evidence="1"/>
<dbReference type="EMBL" id="CU468230">
    <property type="protein sequence ID" value="CAO99697.1"/>
    <property type="molecule type" value="Genomic_DNA"/>
</dbReference>
<dbReference type="SMR" id="B0VQ34"/>
<dbReference type="KEGG" id="abm:ABSDF0302"/>
<dbReference type="HOGENOM" id="CLU_001201_0_2_6"/>
<dbReference type="UniPathway" id="UPA00053">
    <property type="reaction ID" value="UER00085"/>
</dbReference>
<dbReference type="Proteomes" id="UP000001741">
    <property type="component" value="Chromosome"/>
</dbReference>
<dbReference type="GO" id="GO:0005737">
    <property type="term" value="C:cytoplasm"/>
    <property type="evidence" value="ECO:0007669"/>
    <property type="project" value="UniProtKB-SubCell"/>
</dbReference>
<dbReference type="GO" id="GO:0003856">
    <property type="term" value="F:3-dehydroquinate synthase activity"/>
    <property type="evidence" value="ECO:0007669"/>
    <property type="project" value="UniProtKB-UniRule"/>
</dbReference>
<dbReference type="GO" id="GO:0046872">
    <property type="term" value="F:metal ion binding"/>
    <property type="evidence" value="ECO:0007669"/>
    <property type="project" value="UniProtKB-KW"/>
</dbReference>
<dbReference type="GO" id="GO:0000166">
    <property type="term" value="F:nucleotide binding"/>
    <property type="evidence" value="ECO:0007669"/>
    <property type="project" value="UniProtKB-KW"/>
</dbReference>
<dbReference type="GO" id="GO:0008652">
    <property type="term" value="P:amino acid biosynthetic process"/>
    <property type="evidence" value="ECO:0007669"/>
    <property type="project" value="UniProtKB-KW"/>
</dbReference>
<dbReference type="GO" id="GO:0009073">
    <property type="term" value="P:aromatic amino acid family biosynthetic process"/>
    <property type="evidence" value="ECO:0007669"/>
    <property type="project" value="UniProtKB-KW"/>
</dbReference>
<dbReference type="GO" id="GO:0009423">
    <property type="term" value="P:chorismate biosynthetic process"/>
    <property type="evidence" value="ECO:0007669"/>
    <property type="project" value="UniProtKB-UniRule"/>
</dbReference>
<dbReference type="CDD" id="cd08195">
    <property type="entry name" value="DHQS"/>
    <property type="match status" value="1"/>
</dbReference>
<dbReference type="FunFam" id="1.20.1090.10:FF:000002">
    <property type="entry name" value="3-dehydroquinate synthase"/>
    <property type="match status" value="1"/>
</dbReference>
<dbReference type="FunFam" id="3.40.50.1970:FF:000001">
    <property type="entry name" value="3-dehydroquinate synthase"/>
    <property type="match status" value="1"/>
</dbReference>
<dbReference type="Gene3D" id="3.40.50.1970">
    <property type="match status" value="1"/>
</dbReference>
<dbReference type="Gene3D" id="1.20.1090.10">
    <property type="entry name" value="Dehydroquinate synthase-like - alpha domain"/>
    <property type="match status" value="1"/>
</dbReference>
<dbReference type="HAMAP" id="MF_00110">
    <property type="entry name" value="DHQ_synthase"/>
    <property type="match status" value="1"/>
</dbReference>
<dbReference type="InterPro" id="IPR050071">
    <property type="entry name" value="Dehydroquinate_synthase"/>
</dbReference>
<dbReference type="InterPro" id="IPR016037">
    <property type="entry name" value="DHQ_synth_AroB"/>
</dbReference>
<dbReference type="InterPro" id="IPR030963">
    <property type="entry name" value="DHQ_synth_fam"/>
</dbReference>
<dbReference type="InterPro" id="IPR030960">
    <property type="entry name" value="DHQS/DOIS_N"/>
</dbReference>
<dbReference type="InterPro" id="IPR056179">
    <property type="entry name" value="DHQS_C"/>
</dbReference>
<dbReference type="NCBIfam" id="TIGR01357">
    <property type="entry name" value="aroB"/>
    <property type="match status" value="1"/>
</dbReference>
<dbReference type="PANTHER" id="PTHR43622">
    <property type="entry name" value="3-DEHYDROQUINATE SYNTHASE"/>
    <property type="match status" value="1"/>
</dbReference>
<dbReference type="PANTHER" id="PTHR43622:SF7">
    <property type="entry name" value="3-DEHYDROQUINATE SYNTHASE, CHLOROPLASTIC"/>
    <property type="match status" value="1"/>
</dbReference>
<dbReference type="Pfam" id="PF01761">
    <property type="entry name" value="DHQ_synthase"/>
    <property type="match status" value="1"/>
</dbReference>
<dbReference type="Pfam" id="PF24621">
    <property type="entry name" value="DHQS_C"/>
    <property type="match status" value="1"/>
</dbReference>
<dbReference type="PIRSF" id="PIRSF001455">
    <property type="entry name" value="DHQ_synth"/>
    <property type="match status" value="1"/>
</dbReference>
<dbReference type="SUPFAM" id="SSF56796">
    <property type="entry name" value="Dehydroquinate synthase-like"/>
    <property type="match status" value="1"/>
</dbReference>
<name>AROB_ACIBS</name>
<reference key="1">
    <citation type="journal article" date="2008" name="PLoS ONE">
        <title>Comparative analysis of Acinetobacters: three genomes for three lifestyles.</title>
        <authorList>
            <person name="Vallenet D."/>
            <person name="Nordmann P."/>
            <person name="Barbe V."/>
            <person name="Poirel L."/>
            <person name="Mangenot S."/>
            <person name="Bataille E."/>
            <person name="Dossat C."/>
            <person name="Gas S."/>
            <person name="Kreimeyer A."/>
            <person name="Lenoble P."/>
            <person name="Oztas S."/>
            <person name="Poulain J."/>
            <person name="Segurens B."/>
            <person name="Robert C."/>
            <person name="Abergel C."/>
            <person name="Claverie J.-M."/>
            <person name="Raoult D."/>
            <person name="Medigue C."/>
            <person name="Weissenbach J."/>
            <person name="Cruveiller S."/>
        </authorList>
    </citation>
    <scope>NUCLEOTIDE SEQUENCE [LARGE SCALE GENOMIC DNA]</scope>
    <source>
        <strain>SDF</strain>
    </source>
</reference>
<comment type="function">
    <text evidence="1">Catalyzes the conversion of 3-deoxy-D-arabino-heptulosonate 7-phosphate (DAHP) to dehydroquinate (DHQ).</text>
</comment>
<comment type="catalytic activity">
    <reaction evidence="1">
        <text>7-phospho-2-dehydro-3-deoxy-D-arabino-heptonate = 3-dehydroquinate + phosphate</text>
        <dbReference type="Rhea" id="RHEA:21968"/>
        <dbReference type="ChEBI" id="CHEBI:32364"/>
        <dbReference type="ChEBI" id="CHEBI:43474"/>
        <dbReference type="ChEBI" id="CHEBI:58394"/>
        <dbReference type="EC" id="4.2.3.4"/>
    </reaction>
</comment>
<comment type="cofactor">
    <cofactor evidence="1">
        <name>Co(2+)</name>
        <dbReference type="ChEBI" id="CHEBI:48828"/>
    </cofactor>
    <cofactor evidence="1">
        <name>Zn(2+)</name>
        <dbReference type="ChEBI" id="CHEBI:29105"/>
    </cofactor>
    <text evidence="1">Binds 1 divalent metal cation per subunit. Can use either Co(2+) or Zn(2+).</text>
</comment>
<comment type="cofactor">
    <cofactor evidence="1">
        <name>NAD(+)</name>
        <dbReference type="ChEBI" id="CHEBI:57540"/>
    </cofactor>
</comment>
<comment type="pathway">
    <text evidence="1">Metabolic intermediate biosynthesis; chorismate biosynthesis; chorismate from D-erythrose 4-phosphate and phosphoenolpyruvate: step 2/7.</text>
</comment>
<comment type="subcellular location">
    <subcellularLocation>
        <location evidence="1">Cytoplasm</location>
    </subcellularLocation>
</comment>
<comment type="similarity">
    <text evidence="1">Belongs to the sugar phosphate cyclases superfamily. Dehydroquinate synthase family.</text>
</comment>
<keyword id="KW-0028">Amino-acid biosynthesis</keyword>
<keyword id="KW-0057">Aromatic amino acid biosynthesis</keyword>
<keyword id="KW-0170">Cobalt</keyword>
<keyword id="KW-0963">Cytoplasm</keyword>
<keyword id="KW-0456">Lyase</keyword>
<keyword id="KW-0479">Metal-binding</keyword>
<keyword id="KW-0520">NAD</keyword>
<keyword id="KW-0547">Nucleotide-binding</keyword>
<keyword id="KW-0862">Zinc</keyword>
<feature type="chain" id="PRO_1000094440" description="3-dehydroquinate synthase">
    <location>
        <begin position="1"/>
        <end position="360"/>
    </location>
</feature>
<feature type="binding site" evidence="1">
    <location>
        <begin position="70"/>
        <end position="75"/>
    </location>
    <ligand>
        <name>NAD(+)</name>
        <dbReference type="ChEBI" id="CHEBI:57540"/>
    </ligand>
</feature>
<feature type="binding site" evidence="1">
    <location>
        <begin position="104"/>
        <end position="108"/>
    </location>
    <ligand>
        <name>NAD(+)</name>
        <dbReference type="ChEBI" id="CHEBI:57540"/>
    </ligand>
</feature>
<feature type="binding site" evidence="1">
    <location>
        <begin position="128"/>
        <end position="129"/>
    </location>
    <ligand>
        <name>NAD(+)</name>
        <dbReference type="ChEBI" id="CHEBI:57540"/>
    </ligand>
</feature>
<feature type="binding site" evidence="1">
    <location>
        <position position="141"/>
    </location>
    <ligand>
        <name>NAD(+)</name>
        <dbReference type="ChEBI" id="CHEBI:57540"/>
    </ligand>
</feature>
<feature type="binding site" evidence="1">
    <location>
        <position position="150"/>
    </location>
    <ligand>
        <name>NAD(+)</name>
        <dbReference type="ChEBI" id="CHEBI:57540"/>
    </ligand>
</feature>
<feature type="binding site" evidence="1">
    <location>
        <position position="183"/>
    </location>
    <ligand>
        <name>Zn(2+)</name>
        <dbReference type="ChEBI" id="CHEBI:29105"/>
    </ligand>
</feature>
<feature type="binding site" evidence="1">
    <location>
        <position position="246"/>
    </location>
    <ligand>
        <name>Zn(2+)</name>
        <dbReference type="ChEBI" id="CHEBI:29105"/>
    </ligand>
</feature>
<feature type="binding site" evidence="1">
    <location>
        <position position="263"/>
    </location>
    <ligand>
        <name>Zn(2+)</name>
        <dbReference type="ChEBI" id="CHEBI:29105"/>
    </ligand>
</feature>
<organism>
    <name type="scientific">Acinetobacter baumannii (strain SDF)</name>
    <dbReference type="NCBI Taxonomy" id="509170"/>
    <lineage>
        <taxon>Bacteria</taxon>
        <taxon>Pseudomonadati</taxon>
        <taxon>Pseudomonadota</taxon>
        <taxon>Gammaproteobacteria</taxon>
        <taxon>Moraxellales</taxon>
        <taxon>Moraxellaceae</taxon>
        <taxon>Acinetobacter</taxon>
        <taxon>Acinetobacter calcoaceticus/baumannii complex</taxon>
    </lineage>
</organism>
<accession>B0VQ34</accession>